<gene>
    <name type="primary">Armc7</name>
</gene>
<proteinExistence type="evidence at protein level"/>
<name>ARMC7_MOUSE</name>
<sequence length="198" mass="21639">MAQKPKIDPHVGRLGYLQALVTEFQETESQDAKEQVLANLANFAYDPGNYQYLRQLQVLDLFLDSLSEENETLIKFAIGGLCNLCADKANKEHVLQAGGLPLIIGCLSSPDEETVLSAVTTLMYLSSPGSRSHPELTSLPVVQCMLRFSISASTRLRNLAQIFLEDFCSPSQVAEAHSQQAHSALGIPLPKTEAPQQP</sequence>
<keyword id="KW-0507">mRNA processing</keyword>
<keyword id="KW-0508">mRNA splicing</keyword>
<keyword id="KW-0597">Phosphoprotein</keyword>
<keyword id="KW-1185">Reference proteome</keyword>
<keyword id="KW-0677">Repeat</keyword>
<keyword id="KW-0747">Spliceosome</keyword>
<protein>
    <recommendedName>
        <fullName>Armadillo repeat-containing protein 7</fullName>
    </recommendedName>
</protein>
<accession>Q3UJZ3</accession>
<accession>Q8R599</accession>
<organism>
    <name type="scientific">Mus musculus</name>
    <name type="common">Mouse</name>
    <dbReference type="NCBI Taxonomy" id="10090"/>
    <lineage>
        <taxon>Eukaryota</taxon>
        <taxon>Metazoa</taxon>
        <taxon>Chordata</taxon>
        <taxon>Craniata</taxon>
        <taxon>Vertebrata</taxon>
        <taxon>Euteleostomi</taxon>
        <taxon>Mammalia</taxon>
        <taxon>Eutheria</taxon>
        <taxon>Euarchontoglires</taxon>
        <taxon>Glires</taxon>
        <taxon>Rodentia</taxon>
        <taxon>Myomorpha</taxon>
        <taxon>Muroidea</taxon>
        <taxon>Muridae</taxon>
        <taxon>Murinae</taxon>
        <taxon>Mus</taxon>
        <taxon>Mus</taxon>
    </lineage>
</organism>
<feature type="chain" id="PRO_0000242667" description="Armadillo repeat-containing protein 7">
    <location>
        <begin position="1"/>
        <end position="198"/>
    </location>
</feature>
<feature type="repeat" description="ARM 1">
    <location>
        <begin position="57"/>
        <end position="99"/>
    </location>
</feature>
<feature type="repeat" description="ARM 2">
    <location>
        <begin position="100"/>
        <end position="140"/>
    </location>
</feature>
<feature type="modified residue" description="Phosphoserine" evidence="1">
    <location>
        <position position="169"/>
    </location>
</feature>
<feature type="sequence conflict" description="In Ref. 1; BAE27011." evidence="2" ref="1">
    <original>E</original>
    <variation>G</variation>
    <location>
        <position position="34"/>
    </location>
</feature>
<feature type="sequence conflict" description="In Ref. 1; BAE27011." evidence="2" ref="1">
    <original>R</original>
    <variation>H</variation>
    <location>
        <position position="147"/>
    </location>
</feature>
<evidence type="ECO:0000250" key="1">
    <source>
        <dbReference type="UniProtKB" id="Q9H6L4"/>
    </source>
</evidence>
<evidence type="ECO:0000305" key="2"/>
<dbReference type="EMBL" id="AK042345">
    <property type="protein sequence ID" value="BAC31232.1"/>
    <property type="molecule type" value="mRNA"/>
</dbReference>
<dbReference type="EMBL" id="AK146249">
    <property type="protein sequence ID" value="BAE27011.1"/>
    <property type="molecule type" value="mRNA"/>
</dbReference>
<dbReference type="EMBL" id="BC023126">
    <property type="protein sequence ID" value="AAH23126.1"/>
    <property type="molecule type" value="mRNA"/>
</dbReference>
<dbReference type="CCDS" id="CCDS25636.1"/>
<dbReference type="RefSeq" id="NP_808446.1">
    <property type="nucleotide sequence ID" value="NM_177778.5"/>
</dbReference>
<dbReference type="SMR" id="Q3UJZ3"/>
<dbReference type="FunCoup" id="Q3UJZ3">
    <property type="interactions" value="617"/>
</dbReference>
<dbReference type="STRING" id="10090.ENSMUSP00000046120"/>
<dbReference type="iPTMnet" id="Q3UJZ3"/>
<dbReference type="PhosphoSitePlus" id="Q3UJZ3"/>
<dbReference type="PaxDb" id="10090-ENSMUSP00000046120"/>
<dbReference type="ProteomicsDB" id="283165"/>
<dbReference type="Antibodypedia" id="19498">
    <property type="antibodies" value="72 antibodies from 19 providers"/>
</dbReference>
<dbReference type="DNASU" id="276905"/>
<dbReference type="Ensembl" id="ENSMUST00000035240.7">
    <property type="protein sequence ID" value="ENSMUSP00000046120.7"/>
    <property type="gene ID" value="ENSMUSG00000057219.12"/>
</dbReference>
<dbReference type="GeneID" id="276905"/>
<dbReference type="KEGG" id="mmu:276905"/>
<dbReference type="UCSC" id="uc007mht.1">
    <property type="organism name" value="mouse"/>
</dbReference>
<dbReference type="AGR" id="MGI:2679719"/>
<dbReference type="CTD" id="79637"/>
<dbReference type="MGI" id="MGI:2679719">
    <property type="gene designation" value="Armc7"/>
</dbReference>
<dbReference type="VEuPathDB" id="HostDB:ENSMUSG00000057219"/>
<dbReference type="eggNOG" id="KOG4646">
    <property type="taxonomic scope" value="Eukaryota"/>
</dbReference>
<dbReference type="GeneTree" id="ENSGT00940000162633"/>
<dbReference type="HOGENOM" id="CLU_099221_1_0_1"/>
<dbReference type="InParanoid" id="Q3UJZ3"/>
<dbReference type="OMA" id="AILQCML"/>
<dbReference type="OrthoDB" id="201709at2759"/>
<dbReference type="PhylomeDB" id="Q3UJZ3"/>
<dbReference type="TreeFam" id="TF354322"/>
<dbReference type="BioGRID-ORCS" id="276905">
    <property type="hits" value="28 hits in 76 CRISPR screens"/>
</dbReference>
<dbReference type="ChiTaRS" id="Armc7">
    <property type="organism name" value="mouse"/>
</dbReference>
<dbReference type="PRO" id="PR:Q3UJZ3"/>
<dbReference type="Proteomes" id="UP000000589">
    <property type="component" value="Chromosome 11"/>
</dbReference>
<dbReference type="RNAct" id="Q3UJZ3">
    <property type="molecule type" value="protein"/>
</dbReference>
<dbReference type="Bgee" id="ENSMUSG00000057219">
    <property type="expression patterns" value="Expressed in granulocyte and 170 other cell types or tissues"/>
</dbReference>
<dbReference type="GO" id="GO:0005681">
    <property type="term" value="C:spliceosomal complex"/>
    <property type="evidence" value="ECO:0007669"/>
    <property type="project" value="UniProtKB-KW"/>
</dbReference>
<dbReference type="GO" id="GO:0006397">
    <property type="term" value="P:mRNA processing"/>
    <property type="evidence" value="ECO:0007669"/>
    <property type="project" value="UniProtKB-KW"/>
</dbReference>
<dbReference type="GO" id="GO:0008380">
    <property type="term" value="P:RNA splicing"/>
    <property type="evidence" value="ECO:0007669"/>
    <property type="project" value="UniProtKB-KW"/>
</dbReference>
<dbReference type="Gene3D" id="1.25.10.10">
    <property type="entry name" value="Leucine-rich Repeat Variant"/>
    <property type="match status" value="1"/>
</dbReference>
<dbReference type="InterPro" id="IPR011989">
    <property type="entry name" value="ARM-like"/>
</dbReference>
<dbReference type="InterPro" id="IPR016024">
    <property type="entry name" value="ARM-type_fold"/>
</dbReference>
<dbReference type="InterPro" id="IPR000225">
    <property type="entry name" value="Armadillo"/>
</dbReference>
<dbReference type="InterPro" id="IPR042462">
    <property type="entry name" value="ARMC7"/>
</dbReference>
<dbReference type="PANTHER" id="PTHR46263">
    <property type="entry name" value="ARMADILLO REPEAT-CONTAINING PROTEIN 7"/>
    <property type="match status" value="1"/>
</dbReference>
<dbReference type="PANTHER" id="PTHR46263:SF1">
    <property type="entry name" value="ARMADILLO REPEAT-CONTAINING PROTEIN 7"/>
    <property type="match status" value="1"/>
</dbReference>
<dbReference type="Pfam" id="PF00514">
    <property type="entry name" value="Arm"/>
    <property type="match status" value="1"/>
</dbReference>
<dbReference type="SMART" id="SM00185">
    <property type="entry name" value="ARM"/>
    <property type="match status" value="2"/>
</dbReference>
<dbReference type="SUPFAM" id="SSF48371">
    <property type="entry name" value="ARM repeat"/>
    <property type="match status" value="1"/>
</dbReference>
<dbReference type="PROSITE" id="PS50176">
    <property type="entry name" value="ARM_REPEAT"/>
    <property type="match status" value="1"/>
</dbReference>
<reference key="1">
    <citation type="journal article" date="2005" name="Science">
        <title>The transcriptional landscape of the mammalian genome.</title>
        <authorList>
            <person name="Carninci P."/>
            <person name="Kasukawa T."/>
            <person name="Katayama S."/>
            <person name="Gough J."/>
            <person name="Frith M.C."/>
            <person name="Maeda N."/>
            <person name="Oyama R."/>
            <person name="Ravasi T."/>
            <person name="Lenhard B."/>
            <person name="Wells C."/>
            <person name="Kodzius R."/>
            <person name="Shimokawa K."/>
            <person name="Bajic V.B."/>
            <person name="Brenner S.E."/>
            <person name="Batalov S."/>
            <person name="Forrest A.R."/>
            <person name="Zavolan M."/>
            <person name="Davis M.J."/>
            <person name="Wilming L.G."/>
            <person name="Aidinis V."/>
            <person name="Allen J.E."/>
            <person name="Ambesi-Impiombato A."/>
            <person name="Apweiler R."/>
            <person name="Aturaliya R.N."/>
            <person name="Bailey T.L."/>
            <person name="Bansal M."/>
            <person name="Baxter L."/>
            <person name="Beisel K.W."/>
            <person name="Bersano T."/>
            <person name="Bono H."/>
            <person name="Chalk A.M."/>
            <person name="Chiu K.P."/>
            <person name="Choudhary V."/>
            <person name="Christoffels A."/>
            <person name="Clutterbuck D.R."/>
            <person name="Crowe M.L."/>
            <person name="Dalla E."/>
            <person name="Dalrymple B.P."/>
            <person name="de Bono B."/>
            <person name="Della Gatta G."/>
            <person name="di Bernardo D."/>
            <person name="Down T."/>
            <person name="Engstrom P."/>
            <person name="Fagiolini M."/>
            <person name="Faulkner G."/>
            <person name="Fletcher C.F."/>
            <person name="Fukushima T."/>
            <person name="Furuno M."/>
            <person name="Futaki S."/>
            <person name="Gariboldi M."/>
            <person name="Georgii-Hemming P."/>
            <person name="Gingeras T.R."/>
            <person name="Gojobori T."/>
            <person name="Green R.E."/>
            <person name="Gustincich S."/>
            <person name="Harbers M."/>
            <person name="Hayashi Y."/>
            <person name="Hensch T.K."/>
            <person name="Hirokawa N."/>
            <person name="Hill D."/>
            <person name="Huminiecki L."/>
            <person name="Iacono M."/>
            <person name="Ikeo K."/>
            <person name="Iwama A."/>
            <person name="Ishikawa T."/>
            <person name="Jakt M."/>
            <person name="Kanapin A."/>
            <person name="Katoh M."/>
            <person name="Kawasawa Y."/>
            <person name="Kelso J."/>
            <person name="Kitamura H."/>
            <person name="Kitano H."/>
            <person name="Kollias G."/>
            <person name="Krishnan S.P."/>
            <person name="Kruger A."/>
            <person name="Kummerfeld S.K."/>
            <person name="Kurochkin I.V."/>
            <person name="Lareau L.F."/>
            <person name="Lazarevic D."/>
            <person name="Lipovich L."/>
            <person name="Liu J."/>
            <person name="Liuni S."/>
            <person name="McWilliam S."/>
            <person name="Madan Babu M."/>
            <person name="Madera M."/>
            <person name="Marchionni L."/>
            <person name="Matsuda H."/>
            <person name="Matsuzawa S."/>
            <person name="Miki H."/>
            <person name="Mignone F."/>
            <person name="Miyake S."/>
            <person name="Morris K."/>
            <person name="Mottagui-Tabar S."/>
            <person name="Mulder N."/>
            <person name="Nakano N."/>
            <person name="Nakauchi H."/>
            <person name="Ng P."/>
            <person name="Nilsson R."/>
            <person name="Nishiguchi S."/>
            <person name="Nishikawa S."/>
            <person name="Nori F."/>
            <person name="Ohara O."/>
            <person name="Okazaki Y."/>
            <person name="Orlando V."/>
            <person name="Pang K.C."/>
            <person name="Pavan W.J."/>
            <person name="Pavesi G."/>
            <person name="Pesole G."/>
            <person name="Petrovsky N."/>
            <person name="Piazza S."/>
            <person name="Reed J."/>
            <person name="Reid J.F."/>
            <person name="Ring B.Z."/>
            <person name="Ringwald M."/>
            <person name="Rost B."/>
            <person name="Ruan Y."/>
            <person name="Salzberg S.L."/>
            <person name="Sandelin A."/>
            <person name="Schneider C."/>
            <person name="Schoenbach C."/>
            <person name="Sekiguchi K."/>
            <person name="Semple C.A."/>
            <person name="Seno S."/>
            <person name="Sessa L."/>
            <person name="Sheng Y."/>
            <person name="Shibata Y."/>
            <person name="Shimada H."/>
            <person name="Shimada K."/>
            <person name="Silva D."/>
            <person name="Sinclair B."/>
            <person name="Sperling S."/>
            <person name="Stupka E."/>
            <person name="Sugiura K."/>
            <person name="Sultana R."/>
            <person name="Takenaka Y."/>
            <person name="Taki K."/>
            <person name="Tammoja K."/>
            <person name="Tan S.L."/>
            <person name="Tang S."/>
            <person name="Taylor M.S."/>
            <person name="Tegner J."/>
            <person name="Teichmann S.A."/>
            <person name="Ueda H.R."/>
            <person name="van Nimwegen E."/>
            <person name="Verardo R."/>
            <person name="Wei C.L."/>
            <person name="Yagi K."/>
            <person name="Yamanishi H."/>
            <person name="Zabarovsky E."/>
            <person name="Zhu S."/>
            <person name="Zimmer A."/>
            <person name="Hide W."/>
            <person name="Bult C."/>
            <person name="Grimmond S.M."/>
            <person name="Teasdale R.D."/>
            <person name="Liu E.T."/>
            <person name="Brusic V."/>
            <person name="Quackenbush J."/>
            <person name="Wahlestedt C."/>
            <person name="Mattick J.S."/>
            <person name="Hume D.A."/>
            <person name="Kai C."/>
            <person name="Sasaki D."/>
            <person name="Tomaru Y."/>
            <person name="Fukuda S."/>
            <person name="Kanamori-Katayama M."/>
            <person name="Suzuki M."/>
            <person name="Aoki J."/>
            <person name="Arakawa T."/>
            <person name="Iida J."/>
            <person name="Imamura K."/>
            <person name="Itoh M."/>
            <person name="Kato T."/>
            <person name="Kawaji H."/>
            <person name="Kawagashira N."/>
            <person name="Kawashima T."/>
            <person name="Kojima M."/>
            <person name="Kondo S."/>
            <person name="Konno H."/>
            <person name="Nakano K."/>
            <person name="Ninomiya N."/>
            <person name="Nishio T."/>
            <person name="Okada M."/>
            <person name="Plessy C."/>
            <person name="Shibata K."/>
            <person name="Shiraki T."/>
            <person name="Suzuki S."/>
            <person name="Tagami M."/>
            <person name="Waki K."/>
            <person name="Watahiki A."/>
            <person name="Okamura-Oho Y."/>
            <person name="Suzuki H."/>
            <person name="Kawai J."/>
            <person name="Hayashizaki Y."/>
        </authorList>
    </citation>
    <scope>NUCLEOTIDE SEQUENCE [LARGE SCALE MRNA]</scope>
    <source>
        <strain>DBA/2J</strain>
    </source>
</reference>
<reference key="2">
    <citation type="journal article" date="2004" name="Genome Res.">
        <title>The status, quality, and expansion of the NIH full-length cDNA project: the Mammalian Gene Collection (MGC).</title>
        <authorList>
            <consortium name="The MGC Project Team"/>
        </authorList>
    </citation>
    <scope>NUCLEOTIDE SEQUENCE [LARGE SCALE MRNA]</scope>
    <source>
        <strain>FVB/N</strain>
        <tissue>Mammary gland</tissue>
    </source>
</reference>
<reference key="3">
    <citation type="journal article" date="2010" name="Cell">
        <title>A tissue-specific atlas of mouse protein phosphorylation and expression.</title>
        <authorList>
            <person name="Huttlin E.L."/>
            <person name="Jedrychowski M.P."/>
            <person name="Elias J.E."/>
            <person name="Goswami T."/>
            <person name="Rad R."/>
            <person name="Beausoleil S.A."/>
            <person name="Villen J."/>
            <person name="Haas W."/>
            <person name="Sowa M.E."/>
            <person name="Gygi S.P."/>
        </authorList>
    </citation>
    <scope>IDENTIFICATION BY MASS SPECTROMETRY [LARGE SCALE ANALYSIS]</scope>
    <source>
        <tissue>Spleen</tissue>
        <tissue>Testis</tissue>
    </source>
</reference>
<comment type="function">
    <text evidence="1">As a component of the minor spliceosome, involved in the splicing of U12-type introns in pre-mRNAs.</text>
</comment>
<comment type="subunit">
    <text evidence="1">Component of the minor spliceosome. Within this complex, interacts with RBM48.</text>
</comment>